<organism>
    <name type="scientific">Pseudomonas fluorescens (strain ATCC BAA-477 / NRRL B-23932 / Pf-5)</name>
    <dbReference type="NCBI Taxonomy" id="220664"/>
    <lineage>
        <taxon>Bacteria</taxon>
        <taxon>Pseudomonadati</taxon>
        <taxon>Pseudomonadota</taxon>
        <taxon>Gammaproteobacteria</taxon>
        <taxon>Pseudomonadales</taxon>
        <taxon>Pseudomonadaceae</taxon>
        <taxon>Pseudomonas</taxon>
    </lineage>
</organism>
<comment type="function">
    <text evidence="1">Together with the chaperonin GroEL, plays an essential role in assisting protein folding. The GroEL-GroES system forms a nano-cage that allows encapsulation of the non-native substrate proteins and provides a physical environment optimized to promote and accelerate protein folding. GroES binds to the apical surface of the GroEL ring, thereby capping the opening of the GroEL channel.</text>
</comment>
<comment type="subunit">
    <text evidence="1">Heptamer of 7 subunits arranged in a ring. Interacts with the chaperonin GroEL.</text>
</comment>
<comment type="subcellular location">
    <subcellularLocation>
        <location evidence="1">Cytoplasm</location>
    </subcellularLocation>
</comment>
<comment type="similarity">
    <text evidence="1">Belongs to the GroES chaperonin family.</text>
</comment>
<protein>
    <recommendedName>
        <fullName evidence="1">Co-chaperonin GroES</fullName>
    </recommendedName>
    <alternativeName>
        <fullName evidence="1">10 kDa chaperonin</fullName>
    </alternativeName>
    <alternativeName>
        <fullName evidence="1">Chaperonin-10</fullName>
        <shortName evidence="1">Cpn10</shortName>
    </alternativeName>
</protein>
<feature type="chain" id="PRO_1000025336" description="Co-chaperonin GroES">
    <location>
        <begin position="1"/>
        <end position="97"/>
    </location>
</feature>
<evidence type="ECO:0000255" key="1">
    <source>
        <dbReference type="HAMAP-Rule" id="MF_00580"/>
    </source>
</evidence>
<accession>Q4K763</accession>
<sequence>MKLRPLHDRVVIRRSEEESKTAGGIVLPGSAAEKPNRGEIVAVGTGRVLDNGEVRALAVKVGDKVVFGPYSGSNTVKVDGEDLLVMAENEILAVIEG</sequence>
<name>CH10_PSEF5</name>
<gene>
    <name evidence="1" type="primary">groES</name>
    <name evidence="1" type="synonym">groS</name>
    <name type="ordered locus">PFL_4839</name>
</gene>
<dbReference type="EMBL" id="CP000076">
    <property type="protein sequence ID" value="AAY94069.1"/>
    <property type="molecule type" value="Genomic_DNA"/>
</dbReference>
<dbReference type="RefSeq" id="WP_011063093.1">
    <property type="nucleotide sequence ID" value="NC_004129.6"/>
</dbReference>
<dbReference type="SMR" id="Q4K763"/>
<dbReference type="STRING" id="220664.PFL_4839"/>
<dbReference type="KEGG" id="pfl:PFL_4839"/>
<dbReference type="eggNOG" id="COG0234">
    <property type="taxonomic scope" value="Bacteria"/>
</dbReference>
<dbReference type="HOGENOM" id="CLU_132825_2_0_6"/>
<dbReference type="Proteomes" id="UP000008540">
    <property type="component" value="Chromosome"/>
</dbReference>
<dbReference type="GO" id="GO:0005737">
    <property type="term" value="C:cytoplasm"/>
    <property type="evidence" value="ECO:0007669"/>
    <property type="project" value="UniProtKB-SubCell"/>
</dbReference>
<dbReference type="GO" id="GO:0005524">
    <property type="term" value="F:ATP binding"/>
    <property type="evidence" value="ECO:0007669"/>
    <property type="project" value="InterPro"/>
</dbReference>
<dbReference type="GO" id="GO:0046872">
    <property type="term" value="F:metal ion binding"/>
    <property type="evidence" value="ECO:0007669"/>
    <property type="project" value="TreeGrafter"/>
</dbReference>
<dbReference type="GO" id="GO:0044183">
    <property type="term" value="F:protein folding chaperone"/>
    <property type="evidence" value="ECO:0007669"/>
    <property type="project" value="InterPro"/>
</dbReference>
<dbReference type="GO" id="GO:0051087">
    <property type="term" value="F:protein-folding chaperone binding"/>
    <property type="evidence" value="ECO:0007669"/>
    <property type="project" value="TreeGrafter"/>
</dbReference>
<dbReference type="GO" id="GO:0051082">
    <property type="term" value="F:unfolded protein binding"/>
    <property type="evidence" value="ECO:0007669"/>
    <property type="project" value="TreeGrafter"/>
</dbReference>
<dbReference type="GO" id="GO:0051085">
    <property type="term" value="P:chaperone cofactor-dependent protein refolding"/>
    <property type="evidence" value="ECO:0007669"/>
    <property type="project" value="TreeGrafter"/>
</dbReference>
<dbReference type="CDD" id="cd00320">
    <property type="entry name" value="cpn10"/>
    <property type="match status" value="1"/>
</dbReference>
<dbReference type="FunFam" id="2.30.33.40:FF:000001">
    <property type="entry name" value="10 kDa chaperonin"/>
    <property type="match status" value="1"/>
</dbReference>
<dbReference type="Gene3D" id="2.30.33.40">
    <property type="entry name" value="GroES chaperonin"/>
    <property type="match status" value="1"/>
</dbReference>
<dbReference type="HAMAP" id="MF_00580">
    <property type="entry name" value="CH10"/>
    <property type="match status" value="1"/>
</dbReference>
<dbReference type="InterPro" id="IPR020818">
    <property type="entry name" value="Chaperonin_GroES"/>
</dbReference>
<dbReference type="InterPro" id="IPR037124">
    <property type="entry name" value="Chaperonin_GroES_sf"/>
</dbReference>
<dbReference type="InterPro" id="IPR018369">
    <property type="entry name" value="Chaprnonin_Cpn10_CS"/>
</dbReference>
<dbReference type="InterPro" id="IPR011032">
    <property type="entry name" value="GroES-like_sf"/>
</dbReference>
<dbReference type="NCBIfam" id="NF001526">
    <property type="entry name" value="PRK00364.1-1"/>
    <property type="match status" value="1"/>
</dbReference>
<dbReference type="NCBIfam" id="NF001527">
    <property type="entry name" value="PRK00364.1-2"/>
    <property type="match status" value="1"/>
</dbReference>
<dbReference type="NCBIfam" id="NF001531">
    <property type="entry name" value="PRK00364.2-2"/>
    <property type="match status" value="1"/>
</dbReference>
<dbReference type="NCBIfam" id="NF001533">
    <property type="entry name" value="PRK00364.2-4"/>
    <property type="match status" value="1"/>
</dbReference>
<dbReference type="PANTHER" id="PTHR10772">
    <property type="entry name" value="10 KDA HEAT SHOCK PROTEIN"/>
    <property type="match status" value="1"/>
</dbReference>
<dbReference type="PANTHER" id="PTHR10772:SF58">
    <property type="entry name" value="CO-CHAPERONIN GROES"/>
    <property type="match status" value="1"/>
</dbReference>
<dbReference type="Pfam" id="PF00166">
    <property type="entry name" value="Cpn10"/>
    <property type="match status" value="1"/>
</dbReference>
<dbReference type="PRINTS" id="PR00297">
    <property type="entry name" value="CHAPERONIN10"/>
</dbReference>
<dbReference type="SMART" id="SM00883">
    <property type="entry name" value="Cpn10"/>
    <property type="match status" value="1"/>
</dbReference>
<dbReference type="SUPFAM" id="SSF50129">
    <property type="entry name" value="GroES-like"/>
    <property type="match status" value="1"/>
</dbReference>
<dbReference type="PROSITE" id="PS00681">
    <property type="entry name" value="CHAPERONINS_CPN10"/>
    <property type="match status" value="1"/>
</dbReference>
<reference key="1">
    <citation type="journal article" date="2005" name="Nat. Biotechnol.">
        <title>Complete genome sequence of the plant commensal Pseudomonas fluorescens Pf-5.</title>
        <authorList>
            <person name="Paulsen I.T."/>
            <person name="Press C.M."/>
            <person name="Ravel J."/>
            <person name="Kobayashi D.Y."/>
            <person name="Myers G.S.A."/>
            <person name="Mavrodi D.V."/>
            <person name="DeBoy R.T."/>
            <person name="Seshadri R."/>
            <person name="Ren Q."/>
            <person name="Madupu R."/>
            <person name="Dodson R.J."/>
            <person name="Durkin A.S."/>
            <person name="Brinkac L.M."/>
            <person name="Daugherty S.C."/>
            <person name="Sullivan S.A."/>
            <person name="Rosovitz M.J."/>
            <person name="Gwinn M.L."/>
            <person name="Zhou L."/>
            <person name="Schneider D.J."/>
            <person name="Cartinhour S.W."/>
            <person name="Nelson W.C."/>
            <person name="Weidman J."/>
            <person name="Watkins K."/>
            <person name="Tran K."/>
            <person name="Khouri H."/>
            <person name="Pierson E.A."/>
            <person name="Pierson L.S. III"/>
            <person name="Thomashow L.S."/>
            <person name="Loper J.E."/>
        </authorList>
    </citation>
    <scope>NUCLEOTIDE SEQUENCE [LARGE SCALE GENOMIC DNA]</scope>
    <source>
        <strain>ATCC BAA-477 / NRRL B-23932 / Pf-5</strain>
    </source>
</reference>
<proteinExistence type="inferred from homology"/>
<keyword id="KW-0143">Chaperone</keyword>
<keyword id="KW-0963">Cytoplasm</keyword>